<evidence type="ECO:0000255" key="1"/>
<evidence type="ECO:0000255" key="2">
    <source>
        <dbReference type="PROSITE-ProRule" id="PRU00042"/>
    </source>
</evidence>
<evidence type="ECO:0000269" key="3">
    <source>
    </source>
</evidence>
<evidence type="ECO:0000303" key="4">
    <source>
    </source>
</evidence>
<evidence type="ECO:0000305" key="5"/>
<evidence type="ECO:0000312" key="6">
    <source>
        <dbReference type="EMBL" id="AAI08580.1"/>
    </source>
</evidence>
<proteinExistence type="evidence at transcript level"/>
<organism>
    <name type="scientific">Xenopus laevis</name>
    <name type="common">African clawed frog</name>
    <dbReference type="NCBI Taxonomy" id="8355"/>
    <lineage>
        <taxon>Eukaryota</taxon>
        <taxon>Metazoa</taxon>
        <taxon>Chordata</taxon>
        <taxon>Craniata</taxon>
        <taxon>Vertebrata</taxon>
        <taxon>Euteleostomi</taxon>
        <taxon>Amphibia</taxon>
        <taxon>Batrachia</taxon>
        <taxon>Anura</taxon>
        <taxon>Pipoidea</taxon>
        <taxon>Pipidae</taxon>
        <taxon>Xenopodinae</taxon>
        <taxon>Xenopus</taxon>
        <taxon>Xenopus</taxon>
    </lineage>
</organism>
<name>OSR2A_XENLA</name>
<reference evidence="6" key="1">
    <citation type="submission" date="2005-11" db="EMBL/GenBank/DDBJ databases">
        <authorList>
            <consortium name="NIH - Xenopus Gene Collection (XGC) project"/>
        </authorList>
    </citation>
    <scope>NUCLEOTIDE SEQUENCE [LARGE SCALE MRNA]</scope>
    <source>
        <tissue evidence="6">Embryo</tissue>
    </source>
</reference>
<reference evidence="5" key="2">
    <citation type="journal article" date="2007" name="Dev. Biol.">
        <title>Odd-skipped genes encode repressors that control kidney development.</title>
        <authorList>
            <person name="Tena J.J."/>
            <person name="Neto A."/>
            <person name="de la Calle-Mustienes E."/>
            <person name="Bras-Pereira C."/>
            <person name="Casares F."/>
            <person name="Gomez-Skarmeta J.L."/>
        </authorList>
    </citation>
    <scope>FUNCTION</scope>
    <scope>TISSUE SPECIFICITY</scope>
</reference>
<keyword id="KW-0217">Developmental protein</keyword>
<keyword id="KW-0479">Metal-binding</keyword>
<keyword id="KW-0539">Nucleus</keyword>
<keyword id="KW-1185">Reference proteome</keyword>
<keyword id="KW-0677">Repeat</keyword>
<keyword id="KW-0678">Repressor</keyword>
<keyword id="KW-0804">Transcription</keyword>
<keyword id="KW-0805">Transcription regulation</keyword>
<keyword id="KW-0862">Zinc</keyword>
<keyword id="KW-0863">Zinc-finger</keyword>
<protein>
    <recommendedName>
        <fullName>Protein odd-skipped-related 2-A</fullName>
        <shortName evidence="4">XOsr2</shortName>
    </recommendedName>
</protein>
<accession>Q32NK7</accession>
<gene>
    <name type="primary">osr2-a</name>
    <name evidence="4" type="synonym">osr2</name>
</gene>
<dbReference type="EMBL" id="BC108579">
    <property type="protein sequence ID" value="AAI08580.1"/>
    <property type="molecule type" value="mRNA"/>
</dbReference>
<dbReference type="RefSeq" id="NP_001089872.1">
    <property type="nucleotide sequence ID" value="NM_001096403.1"/>
</dbReference>
<dbReference type="BMRB" id="Q32NK7"/>
<dbReference type="SMR" id="Q32NK7"/>
<dbReference type="DNASU" id="734939"/>
<dbReference type="GeneID" id="734939"/>
<dbReference type="KEGG" id="xla:734939"/>
<dbReference type="AGR" id="Xenbase:XB-GENE-6254720"/>
<dbReference type="CTD" id="734939"/>
<dbReference type="Xenbase" id="XB-GENE-6254720">
    <property type="gene designation" value="osr2.S"/>
</dbReference>
<dbReference type="OMA" id="CTHRARK"/>
<dbReference type="OrthoDB" id="9451254at2759"/>
<dbReference type="Proteomes" id="UP000186698">
    <property type="component" value="Chromosome 6S"/>
</dbReference>
<dbReference type="Bgee" id="734939">
    <property type="expression patterns" value="Expressed in neurula embryo and 12 other cell types or tissues"/>
</dbReference>
<dbReference type="GO" id="GO:0005634">
    <property type="term" value="C:nucleus"/>
    <property type="evidence" value="ECO:0000318"/>
    <property type="project" value="GO_Central"/>
</dbReference>
<dbReference type="GO" id="GO:0000981">
    <property type="term" value="F:DNA-binding transcription factor activity, RNA polymerase II-specific"/>
    <property type="evidence" value="ECO:0000318"/>
    <property type="project" value="GO_Central"/>
</dbReference>
<dbReference type="GO" id="GO:0000977">
    <property type="term" value="F:RNA polymerase II transcription regulatory region sequence-specific DNA binding"/>
    <property type="evidence" value="ECO:0000318"/>
    <property type="project" value="GO_Central"/>
</dbReference>
<dbReference type="GO" id="GO:0008270">
    <property type="term" value="F:zinc ion binding"/>
    <property type="evidence" value="ECO:0007669"/>
    <property type="project" value="UniProtKB-KW"/>
</dbReference>
<dbReference type="GO" id="GO:0045892">
    <property type="term" value="P:negative regulation of DNA-templated transcription"/>
    <property type="evidence" value="ECO:0000315"/>
    <property type="project" value="UniProtKB"/>
</dbReference>
<dbReference type="GO" id="GO:0000122">
    <property type="term" value="P:negative regulation of transcription by RNA polymerase II"/>
    <property type="evidence" value="ECO:0000315"/>
    <property type="project" value="UniProtKB"/>
</dbReference>
<dbReference type="GO" id="GO:0007389">
    <property type="term" value="P:pattern specification process"/>
    <property type="evidence" value="ECO:0000318"/>
    <property type="project" value="GO_Central"/>
</dbReference>
<dbReference type="GO" id="GO:0048793">
    <property type="term" value="P:pronephros development"/>
    <property type="evidence" value="ECO:0000315"/>
    <property type="project" value="UniProtKB"/>
</dbReference>
<dbReference type="GO" id="GO:0001655">
    <property type="term" value="P:urogenital system development"/>
    <property type="evidence" value="ECO:0000318"/>
    <property type="project" value="GO_Central"/>
</dbReference>
<dbReference type="FunFam" id="3.30.160.60:FF:000254">
    <property type="entry name" value="Odd-skipped related transciption factor 1"/>
    <property type="match status" value="1"/>
</dbReference>
<dbReference type="FunFam" id="3.30.160.60:FF:000090">
    <property type="entry name" value="Odd-skipped-related transciption factor 2"/>
    <property type="match status" value="1"/>
</dbReference>
<dbReference type="FunFam" id="3.30.160.60:FF:000311">
    <property type="entry name" value="protein odd-skipped-related 2 isoform X1"/>
    <property type="match status" value="1"/>
</dbReference>
<dbReference type="Gene3D" id="3.30.160.60">
    <property type="entry name" value="Classic Zinc Finger"/>
    <property type="match status" value="3"/>
</dbReference>
<dbReference type="InterPro" id="IPR050717">
    <property type="entry name" value="C2H2-ZF_Transcription_Reg"/>
</dbReference>
<dbReference type="InterPro" id="IPR036236">
    <property type="entry name" value="Znf_C2H2_sf"/>
</dbReference>
<dbReference type="InterPro" id="IPR013087">
    <property type="entry name" value="Znf_C2H2_type"/>
</dbReference>
<dbReference type="PANTHER" id="PTHR14196">
    <property type="entry name" value="ODD-SKIPPED - RELATED"/>
    <property type="match status" value="1"/>
</dbReference>
<dbReference type="PANTHER" id="PTHR14196:SF4">
    <property type="entry name" value="PROTEIN ODD-SKIPPED-RELATED 2"/>
    <property type="match status" value="1"/>
</dbReference>
<dbReference type="Pfam" id="PF00096">
    <property type="entry name" value="zf-C2H2"/>
    <property type="match status" value="3"/>
</dbReference>
<dbReference type="SMART" id="SM00355">
    <property type="entry name" value="ZnF_C2H2"/>
    <property type="match status" value="3"/>
</dbReference>
<dbReference type="SUPFAM" id="SSF57667">
    <property type="entry name" value="beta-beta-alpha zinc fingers"/>
    <property type="match status" value="2"/>
</dbReference>
<dbReference type="PROSITE" id="PS00028">
    <property type="entry name" value="ZINC_FINGER_C2H2_1"/>
    <property type="match status" value="3"/>
</dbReference>
<dbReference type="PROSITE" id="PS50157">
    <property type="entry name" value="ZINC_FINGER_C2H2_2"/>
    <property type="match status" value="3"/>
</dbReference>
<sequence>MGSKALPAPVPLHPSLQLTNYSFLQAVNTFPAAVDHLQGLYGLSAVQTMHMNHWTLGYPNLHGLTRSTITEMAAAQGLMDARFSFPALPFATHLFHPKQGTIAHVIPALHKDRPRFDFANLAIAATQEDPPKIGDLSKLSPGLGSPISEISKLSPDRKPSRGRLPSKTKKEFICKFCGRHFTKSYNLLIHERTHTDERPYTCDICHKAFRRQDHLRDHRYIHSKEKPFKCQECGKGFCQSRTLAVHKTLHMQTSSPTVVSSAEKFSGEIAI</sequence>
<comment type="function">
    <text evidence="3">Transcriptional repressor. Required for pronephric kidney development.</text>
</comment>
<comment type="subcellular location">
    <subcellularLocation>
        <location evidence="3 5">Nucleus</location>
    </subcellularLocation>
</comment>
<comment type="tissue specificity">
    <text evidence="3">At early gastrula stage, expressed in the involuting mesoderm and endoderm. At the end of gastrulation, expressed in the intermediate mesoderm. During neurulation, expressed in the pronephric primordium, preceding expression of osr1. During tailbud (stage 35), expressed broadly in both the kidney ducts and tubules.</text>
</comment>
<comment type="similarity">
    <text evidence="1">Belongs to the Odd C2H2-type zinc-finger protein family.</text>
</comment>
<feature type="chain" id="PRO_0000390733" description="Protein odd-skipped-related 2-A">
    <location>
        <begin position="1"/>
        <end position="271"/>
    </location>
</feature>
<feature type="zinc finger region" description="C2H2-type 1" evidence="2">
    <location>
        <begin position="172"/>
        <end position="194"/>
    </location>
</feature>
<feature type="zinc finger region" description="C2H2-type 2" evidence="2">
    <location>
        <begin position="200"/>
        <end position="222"/>
    </location>
</feature>
<feature type="zinc finger region" description="C2H2-type 3" evidence="2">
    <location>
        <begin position="228"/>
        <end position="250"/>
    </location>
</feature>